<protein>
    <recommendedName>
        <fullName evidence="1">Small ribosomal subunit protein uS14</fullName>
    </recommendedName>
    <alternativeName>
        <fullName evidence="2">30S ribosomal protein S14</fullName>
    </alternativeName>
</protein>
<sequence length="101" mass="11414">MAKKGMINRELKREKTVAKYAAKRAELKATIANVNASDEERFEAMLKLQALPRNASPVRLRNRCGLTGRPHGYFRKFGLSRNKLRDTVMQGDVPGVVKASW</sequence>
<organism>
    <name type="scientific">Acinetobacter baumannii (strain AB307-0294)</name>
    <dbReference type="NCBI Taxonomy" id="557600"/>
    <lineage>
        <taxon>Bacteria</taxon>
        <taxon>Pseudomonadati</taxon>
        <taxon>Pseudomonadota</taxon>
        <taxon>Gammaproteobacteria</taxon>
        <taxon>Moraxellales</taxon>
        <taxon>Moraxellaceae</taxon>
        <taxon>Acinetobacter</taxon>
        <taxon>Acinetobacter calcoaceticus/baumannii complex</taxon>
    </lineage>
</organism>
<keyword id="KW-0687">Ribonucleoprotein</keyword>
<keyword id="KW-0689">Ribosomal protein</keyword>
<keyword id="KW-0694">RNA-binding</keyword>
<keyword id="KW-0699">rRNA-binding</keyword>
<gene>
    <name evidence="1" type="primary">rpsN</name>
    <name type="ordered locus">ABBFA_000445</name>
</gene>
<reference key="1">
    <citation type="journal article" date="2008" name="J. Bacteriol.">
        <title>Comparative genome sequence analysis of multidrug-resistant Acinetobacter baumannii.</title>
        <authorList>
            <person name="Adams M.D."/>
            <person name="Goglin K."/>
            <person name="Molyneaux N."/>
            <person name="Hujer K.M."/>
            <person name="Lavender H."/>
            <person name="Jamison J.J."/>
            <person name="MacDonald I.J."/>
            <person name="Martin K.M."/>
            <person name="Russo T."/>
            <person name="Campagnari A.A."/>
            <person name="Hujer A.M."/>
            <person name="Bonomo R.A."/>
            <person name="Gill S.R."/>
        </authorList>
    </citation>
    <scope>NUCLEOTIDE SEQUENCE [LARGE SCALE GENOMIC DNA]</scope>
    <source>
        <strain>AB307-0294</strain>
    </source>
</reference>
<evidence type="ECO:0000255" key="1">
    <source>
        <dbReference type="HAMAP-Rule" id="MF_00537"/>
    </source>
</evidence>
<evidence type="ECO:0000305" key="2"/>
<dbReference type="EMBL" id="CP001172">
    <property type="protein sequence ID" value="ACJ57854.1"/>
    <property type="molecule type" value="Genomic_DNA"/>
</dbReference>
<dbReference type="RefSeq" id="WP_001074624.1">
    <property type="nucleotide sequence ID" value="NZ_CP001172.1"/>
</dbReference>
<dbReference type="SMR" id="B7GW15"/>
<dbReference type="GeneID" id="92895304"/>
<dbReference type="HOGENOM" id="CLU_139869_0_1_6"/>
<dbReference type="Proteomes" id="UP000006924">
    <property type="component" value="Chromosome"/>
</dbReference>
<dbReference type="GO" id="GO:0005737">
    <property type="term" value="C:cytoplasm"/>
    <property type="evidence" value="ECO:0007669"/>
    <property type="project" value="UniProtKB-ARBA"/>
</dbReference>
<dbReference type="GO" id="GO:0015935">
    <property type="term" value="C:small ribosomal subunit"/>
    <property type="evidence" value="ECO:0007669"/>
    <property type="project" value="TreeGrafter"/>
</dbReference>
<dbReference type="GO" id="GO:0019843">
    <property type="term" value="F:rRNA binding"/>
    <property type="evidence" value="ECO:0007669"/>
    <property type="project" value="UniProtKB-UniRule"/>
</dbReference>
<dbReference type="GO" id="GO:0003735">
    <property type="term" value="F:structural constituent of ribosome"/>
    <property type="evidence" value="ECO:0007669"/>
    <property type="project" value="InterPro"/>
</dbReference>
<dbReference type="GO" id="GO:0006412">
    <property type="term" value="P:translation"/>
    <property type="evidence" value="ECO:0007669"/>
    <property type="project" value="UniProtKB-UniRule"/>
</dbReference>
<dbReference type="FunFam" id="1.10.287.1480:FF:000001">
    <property type="entry name" value="30S ribosomal protein S14"/>
    <property type="match status" value="1"/>
</dbReference>
<dbReference type="Gene3D" id="1.10.287.1480">
    <property type="match status" value="1"/>
</dbReference>
<dbReference type="HAMAP" id="MF_00537">
    <property type="entry name" value="Ribosomal_uS14_1"/>
    <property type="match status" value="1"/>
</dbReference>
<dbReference type="InterPro" id="IPR001209">
    <property type="entry name" value="Ribosomal_uS14"/>
</dbReference>
<dbReference type="InterPro" id="IPR023036">
    <property type="entry name" value="Ribosomal_uS14_bac/plastid"/>
</dbReference>
<dbReference type="InterPro" id="IPR018271">
    <property type="entry name" value="Ribosomal_uS14_CS"/>
</dbReference>
<dbReference type="NCBIfam" id="NF006477">
    <property type="entry name" value="PRK08881.1"/>
    <property type="match status" value="1"/>
</dbReference>
<dbReference type="PANTHER" id="PTHR19836">
    <property type="entry name" value="30S RIBOSOMAL PROTEIN S14"/>
    <property type="match status" value="1"/>
</dbReference>
<dbReference type="PANTHER" id="PTHR19836:SF19">
    <property type="entry name" value="SMALL RIBOSOMAL SUBUNIT PROTEIN US14M"/>
    <property type="match status" value="1"/>
</dbReference>
<dbReference type="Pfam" id="PF00253">
    <property type="entry name" value="Ribosomal_S14"/>
    <property type="match status" value="1"/>
</dbReference>
<dbReference type="SUPFAM" id="SSF57716">
    <property type="entry name" value="Glucocorticoid receptor-like (DNA-binding domain)"/>
    <property type="match status" value="1"/>
</dbReference>
<dbReference type="PROSITE" id="PS00527">
    <property type="entry name" value="RIBOSOMAL_S14"/>
    <property type="match status" value="1"/>
</dbReference>
<accession>B7GW15</accession>
<proteinExistence type="inferred from homology"/>
<feature type="chain" id="PRO_1000128275" description="Small ribosomal subunit protein uS14">
    <location>
        <begin position="1"/>
        <end position="101"/>
    </location>
</feature>
<name>RS14_ACIB3</name>
<comment type="function">
    <text evidence="1">Binds 16S rRNA, required for the assembly of 30S particles and may also be responsible for determining the conformation of the 16S rRNA at the A site.</text>
</comment>
<comment type="subunit">
    <text evidence="1">Part of the 30S ribosomal subunit. Contacts proteins S3 and S10.</text>
</comment>
<comment type="similarity">
    <text evidence="1">Belongs to the universal ribosomal protein uS14 family.</text>
</comment>